<name>CUTA_DANRE</name>
<proteinExistence type="evidence at transcript level"/>
<feature type="signal peptide" evidence="2">
    <location>
        <begin position="1"/>
        <end position="31"/>
    </location>
</feature>
<feature type="chain" id="PRO_0000006382" description="Protein CutA homolog">
    <location>
        <begin position="32"/>
        <end position="150"/>
    </location>
</feature>
<accession>Q7T3C3</accession>
<evidence type="ECO:0000250" key="1"/>
<evidence type="ECO:0000255" key="2"/>
<evidence type="ECO:0000305" key="3"/>
<dbReference type="EMBL" id="BC053175">
    <property type="protein sequence ID" value="AAH53175.1"/>
    <property type="molecule type" value="mRNA"/>
</dbReference>
<dbReference type="RefSeq" id="NP_956648.1">
    <property type="nucleotide sequence ID" value="NM_200354.1"/>
</dbReference>
<dbReference type="SMR" id="Q7T3C3"/>
<dbReference type="FunCoup" id="Q7T3C3">
    <property type="interactions" value="552"/>
</dbReference>
<dbReference type="STRING" id="7955.ENSDARP00000120564"/>
<dbReference type="PaxDb" id="7955-ENSDARP00000120564"/>
<dbReference type="GeneID" id="572862"/>
<dbReference type="KEGG" id="dre:572862"/>
<dbReference type="AGR" id="ZFIN:ZDB-GENE-040426-1320"/>
<dbReference type="ZFIN" id="ZDB-GENE-040426-1320">
    <property type="gene designation" value="zgc:63972"/>
</dbReference>
<dbReference type="eggNOG" id="KOG3338">
    <property type="taxonomic scope" value="Eukaryota"/>
</dbReference>
<dbReference type="InParanoid" id="Q7T3C3"/>
<dbReference type="OrthoDB" id="2017693at2759"/>
<dbReference type="PhylomeDB" id="Q7T3C3"/>
<dbReference type="PRO" id="PR:Q7T3C3"/>
<dbReference type="Proteomes" id="UP000000437">
    <property type="component" value="Alternate scaffold 5"/>
</dbReference>
<dbReference type="Proteomes" id="UP000000437">
    <property type="component" value="Chromosome 5"/>
</dbReference>
<dbReference type="GO" id="GO:0005507">
    <property type="term" value="F:copper ion binding"/>
    <property type="evidence" value="ECO:0000318"/>
    <property type="project" value="GO_Central"/>
</dbReference>
<dbReference type="GO" id="GO:0010038">
    <property type="term" value="P:response to metal ion"/>
    <property type="evidence" value="ECO:0007669"/>
    <property type="project" value="InterPro"/>
</dbReference>
<dbReference type="FunFam" id="3.30.70.120:FF:000011">
    <property type="entry name" value="CutA divalent cation tolerance homolog-like"/>
    <property type="match status" value="1"/>
</dbReference>
<dbReference type="Gene3D" id="3.30.70.120">
    <property type="match status" value="1"/>
</dbReference>
<dbReference type="InterPro" id="IPR004323">
    <property type="entry name" value="Ion_tolerance_CutA"/>
</dbReference>
<dbReference type="InterPro" id="IPR011322">
    <property type="entry name" value="N-reg_PII-like_a/b"/>
</dbReference>
<dbReference type="InterPro" id="IPR015867">
    <property type="entry name" value="N-reg_PII/ATP_PRibTrfase_C"/>
</dbReference>
<dbReference type="PANTHER" id="PTHR23419:SF2">
    <property type="entry name" value="CUTA DIVALENT CATION TOLERANCE HOMOLOG-LIKE"/>
    <property type="match status" value="1"/>
</dbReference>
<dbReference type="PANTHER" id="PTHR23419">
    <property type="entry name" value="DIVALENT CATION TOLERANCE CUTA-RELATED"/>
    <property type="match status" value="1"/>
</dbReference>
<dbReference type="Pfam" id="PF03091">
    <property type="entry name" value="CutA1"/>
    <property type="match status" value="1"/>
</dbReference>
<dbReference type="SUPFAM" id="SSF54913">
    <property type="entry name" value="GlnB-like"/>
    <property type="match status" value="1"/>
</dbReference>
<reference key="1">
    <citation type="submission" date="2003-06" db="EMBL/GenBank/DDBJ databases">
        <authorList>
            <consortium name="NIH - Zebrafish Gene Collection (ZGC) project"/>
        </authorList>
    </citation>
    <scope>NUCLEOTIDE SEQUENCE [LARGE SCALE MRNA]</scope>
    <source>
        <tissue>Kidney</tissue>
    </source>
</reference>
<protein>
    <recommendedName>
        <fullName>Protein CutA homolog</fullName>
    </recommendedName>
</protein>
<comment type="subunit">
    <text evidence="1">Homotrimer.</text>
</comment>
<comment type="similarity">
    <text evidence="3">Belongs to the CutA family.</text>
</comment>
<keyword id="KW-1185">Reference proteome</keyword>
<keyword id="KW-0732">Signal</keyword>
<sequence>MSSAVPRSGFVVFCVLLVVTLALYPVLRTLGVQIYSAFTGKYVSGYHSLLLVNCPTEQTARDIGRIIMEKRLAACVNIFPRTATMYYWKGEIRDATEILLLVRTKTSLVQRLMTYITAIHPYDIPEIITFPINDGSQHYLKWIAEAVTDS</sequence>
<organism>
    <name type="scientific">Danio rerio</name>
    <name type="common">Zebrafish</name>
    <name type="synonym">Brachydanio rerio</name>
    <dbReference type="NCBI Taxonomy" id="7955"/>
    <lineage>
        <taxon>Eukaryota</taxon>
        <taxon>Metazoa</taxon>
        <taxon>Chordata</taxon>
        <taxon>Craniata</taxon>
        <taxon>Vertebrata</taxon>
        <taxon>Euteleostomi</taxon>
        <taxon>Actinopterygii</taxon>
        <taxon>Neopterygii</taxon>
        <taxon>Teleostei</taxon>
        <taxon>Ostariophysi</taxon>
        <taxon>Cypriniformes</taxon>
        <taxon>Danionidae</taxon>
        <taxon>Danioninae</taxon>
        <taxon>Danio</taxon>
    </lineage>
</organism>
<gene>
    <name type="primary">cuta</name>
    <name type="ORF">zgc:63972</name>
</gene>